<comment type="function">
    <text evidence="1">One of the essential components for the initiation of protein synthesis. Stabilizes the binding of IF-2 and IF-3 on the 30S subunit to which N-formylmethionyl-tRNA(fMet) subsequently binds. Helps modulate mRNA selection, yielding the 30S pre-initiation complex (PIC). Upon addition of the 50S ribosomal subunit IF-1, IF-2 and IF-3 are released leaving the mature 70S translation initiation complex.</text>
</comment>
<comment type="subunit">
    <text evidence="1">Component of the 30S ribosomal translation pre-initiation complex which assembles on the 30S ribosome in the order IF-2 and IF-3, IF-1 and N-formylmethionyl-tRNA(fMet); mRNA recruitment can occur at any time during PIC assembly.</text>
</comment>
<comment type="subcellular location">
    <subcellularLocation>
        <location evidence="1">Cytoplasm</location>
    </subcellularLocation>
</comment>
<comment type="similarity">
    <text evidence="1">Belongs to the IF-1 family.</text>
</comment>
<dbReference type="EMBL" id="CP000521">
    <property type="protein sequence ID" value="ABO10876.1"/>
    <property type="molecule type" value="Genomic_DNA"/>
</dbReference>
<dbReference type="RefSeq" id="WP_001284370.1">
    <property type="nucleotide sequence ID" value="NZ_CP053098.1"/>
</dbReference>
<dbReference type="SMR" id="A3M1T2"/>
<dbReference type="GeneID" id="97427306"/>
<dbReference type="KEGG" id="acb:A1S_0421"/>
<dbReference type="HOGENOM" id="CLU_151267_1_0_6"/>
<dbReference type="GO" id="GO:0005829">
    <property type="term" value="C:cytosol"/>
    <property type="evidence" value="ECO:0007669"/>
    <property type="project" value="TreeGrafter"/>
</dbReference>
<dbReference type="GO" id="GO:0043022">
    <property type="term" value="F:ribosome binding"/>
    <property type="evidence" value="ECO:0007669"/>
    <property type="project" value="UniProtKB-UniRule"/>
</dbReference>
<dbReference type="GO" id="GO:0019843">
    <property type="term" value="F:rRNA binding"/>
    <property type="evidence" value="ECO:0007669"/>
    <property type="project" value="UniProtKB-UniRule"/>
</dbReference>
<dbReference type="GO" id="GO:0003743">
    <property type="term" value="F:translation initiation factor activity"/>
    <property type="evidence" value="ECO:0007669"/>
    <property type="project" value="UniProtKB-UniRule"/>
</dbReference>
<dbReference type="CDD" id="cd04451">
    <property type="entry name" value="S1_IF1"/>
    <property type="match status" value="1"/>
</dbReference>
<dbReference type="FunFam" id="2.40.50.140:FF:000002">
    <property type="entry name" value="Translation initiation factor IF-1"/>
    <property type="match status" value="1"/>
</dbReference>
<dbReference type="Gene3D" id="2.40.50.140">
    <property type="entry name" value="Nucleic acid-binding proteins"/>
    <property type="match status" value="1"/>
</dbReference>
<dbReference type="HAMAP" id="MF_00075">
    <property type="entry name" value="IF_1"/>
    <property type="match status" value="1"/>
</dbReference>
<dbReference type="InterPro" id="IPR012340">
    <property type="entry name" value="NA-bd_OB-fold"/>
</dbReference>
<dbReference type="InterPro" id="IPR006196">
    <property type="entry name" value="RNA-binding_domain_S1_IF1"/>
</dbReference>
<dbReference type="InterPro" id="IPR003029">
    <property type="entry name" value="S1_domain"/>
</dbReference>
<dbReference type="InterPro" id="IPR004368">
    <property type="entry name" value="TIF_IF1"/>
</dbReference>
<dbReference type="NCBIfam" id="TIGR00008">
    <property type="entry name" value="infA"/>
    <property type="match status" value="1"/>
</dbReference>
<dbReference type="PANTHER" id="PTHR33370">
    <property type="entry name" value="TRANSLATION INITIATION FACTOR IF-1, CHLOROPLASTIC"/>
    <property type="match status" value="1"/>
</dbReference>
<dbReference type="PANTHER" id="PTHR33370:SF1">
    <property type="entry name" value="TRANSLATION INITIATION FACTOR IF-1, CHLOROPLASTIC"/>
    <property type="match status" value="1"/>
</dbReference>
<dbReference type="Pfam" id="PF01176">
    <property type="entry name" value="eIF-1a"/>
    <property type="match status" value="1"/>
</dbReference>
<dbReference type="SMART" id="SM00316">
    <property type="entry name" value="S1"/>
    <property type="match status" value="1"/>
</dbReference>
<dbReference type="SUPFAM" id="SSF50249">
    <property type="entry name" value="Nucleic acid-binding proteins"/>
    <property type="match status" value="1"/>
</dbReference>
<dbReference type="PROSITE" id="PS50832">
    <property type="entry name" value="S1_IF1_TYPE"/>
    <property type="match status" value="1"/>
</dbReference>
<accession>A3M1T2</accession>
<organism>
    <name type="scientific">Acinetobacter baumannii (strain ATCC 17978 / DSM 105126 / CIP 53.77 / LMG 1025 / NCDC KC755 / 5377)</name>
    <dbReference type="NCBI Taxonomy" id="400667"/>
    <lineage>
        <taxon>Bacteria</taxon>
        <taxon>Pseudomonadati</taxon>
        <taxon>Pseudomonadota</taxon>
        <taxon>Gammaproteobacteria</taxon>
        <taxon>Moraxellales</taxon>
        <taxon>Moraxellaceae</taxon>
        <taxon>Acinetobacter</taxon>
        <taxon>Acinetobacter calcoaceticus/baumannii complex</taxon>
    </lineage>
</organism>
<sequence>MANKEELIEFEGVVTETLPNTMFRVRLENGHEVIAHISGKMRKHYIRILTGDSVKVEMTPYDLTKGRITYRAR</sequence>
<proteinExistence type="inferred from homology"/>
<protein>
    <recommendedName>
        <fullName evidence="1">Translation initiation factor IF-1</fullName>
    </recommendedName>
</protein>
<reference key="1">
    <citation type="journal article" date="2007" name="Genes Dev.">
        <title>New insights into Acinetobacter baumannii pathogenesis revealed by high-density pyrosequencing and transposon mutagenesis.</title>
        <authorList>
            <person name="Smith M.G."/>
            <person name="Gianoulis T.A."/>
            <person name="Pukatzki S."/>
            <person name="Mekalanos J.J."/>
            <person name="Ornston L.N."/>
            <person name="Gerstein M."/>
            <person name="Snyder M."/>
        </authorList>
    </citation>
    <scope>NUCLEOTIDE SEQUENCE [LARGE SCALE GENOMIC DNA]</scope>
    <source>
        <strain>ATCC 17978 / DSM 105126 / CIP 53.77 / LMG 1025 / NCDC KC755 / 5377</strain>
    </source>
</reference>
<name>IF1_ACIBT</name>
<keyword id="KW-0963">Cytoplasm</keyword>
<keyword id="KW-0396">Initiation factor</keyword>
<keyword id="KW-0648">Protein biosynthesis</keyword>
<keyword id="KW-0694">RNA-binding</keyword>
<keyword id="KW-0699">rRNA-binding</keyword>
<evidence type="ECO:0000255" key="1">
    <source>
        <dbReference type="HAMAP-Rule" id="MF_00075"/>
    </source>
</evidence>
<feature type="chain" id="PRO_0000338750" description="Translation initiation factor IF-1">
    <location>
        <begin position="1"/>
        <end position="73"/>
    </location>
</feature>
<feature type="domain" description="S1-like" evidence="1">
    <location>
        <begin position="1"/>
        <end position="73"/>
    </location>
</feature>
<gene>
    <name evidence="1" type="primary">infA</name>
    <name type="ordered locus">A1S_0421</name>
</gene>